<keyword id="KW-0054">Arabinose catabolism</keyword>
<keyword id="KW-0067">ATP-binding</keyword>
<keyword id="KW-0119">Carbohydrate metabolism</keyword>
<keyword id="KW-0418">Kinase</keyword>
<keyword id="KW-0547">Nucleotide-binding</keyword>
<keyword id="KW-0808">Transferase</keyword>
<sequence length="569" mass="61759">MAIAIGLDFGSDSVRALAVDCATGDEIATSVEWYPRWQEGRYCDGPNNQFRHHPRDYMESMEAALKAVLAQLSAAQRANVVGIGVDSTGSTPAPIDADGNVLALRPEFAENPNAMFVLWKDHTAVEEADEITRLCHKPGKVDYSRYIGGIYSSEWFWAKILHVTRQDSAVAQAAVSWIELCDWVPALLSGTTRPQDIRRGRCSAGHKTLWHESWGGLPPASFFDELDPCINRHLRYPLFSETFTADLPVGTLCAEWAQRLGLPESVVISGGAFDCHMGAVGAGAQPNTLVKVIGTSTCDILIADKQSVGDRAVKGICGQVDGSVVPNFIGLEAGQSAFGDIYAWFSRVLSWPLEQLAAQHPELKTQINASQKQLLPALTDAWAKNPSLDHLPVVLDWFNGRRTPNANQRLKGVITDLNLATDAPALFGGLVASTAFGARAIQECFTEQGIAVNNVMALGGIARKNQVIMQVCCDVLNRPLQIVASDQCCALGAAIFAAVAAKVHADIPAAQQSMASAVERTLRPRPEQAQRFERLYRRYQQWALSAEQHYLPTAAPAPTTPANQAILTH</sequence>
<proteinExistence type="inferred from homology"/>
<reference key="1">
    <citation type="journal article" date="2009" name="BMC Genomics">
        <title>Pseudogene accumulation in the evolutionary histories of Salmonella enterica serovars Paratyphi A and Typhi.</title>
        <authorList>
            <person name="Holt K.E."/>
            <person name="Thomson N.R."/>
            <person name="Wain J."/>
            <person name="Langridge G.C."/>
            <person name="Hasan R."/>
            <person name="Bhutta Z.A."/>
            <person name="Quail M.A."/>
            <person name="Norbertczak H."/>
            <person name="Walker D."/>
            <person name="Simmonds M."/>
            <person name="White B."/>
            <person name="Bason N."/>
            <person name="Mungall K."/>
            <person name="Dougan G."/>
            <person name="Parkhill J."/>
        </authorList>
    </citation>
    <scope>NUCLEOTIDE SEQUENCE [LARGE SCALE GENOMIC DNA]</scope>
    <source>
        <strain>AKU_12601</strain>
    </source>
</reference>
<gene>
    <name evidence="1" type="primary">araB</name>
    <name type="ordered locus">SSPA0101</name>
</gene>
<protein>
    <recommendedName>
        <fullName evidence="1">Ribulokinase</fullName>
        <ecNumber evidence="1">2.7.1.16</ecNumber>
    </recommendedName>
</protein>
<accession>B5BL44</accession>
<name>ARAB_SALPK</name>
<comment type="catalytic activity">
    <reaction evidence="1">
        <text>D-ribulose + ATP = D-ribulose 5-phosphate + ADP + H(+)</text>
        <dbReference type="Rhea" id="RHEA:17601"/>
        <dbReference type="ChEBI" id="CHEBI:15378"/>
        <dbReference type="ChEBI" id="CHEBI:17173"/>
        <dbReference type="ChEBI" id="CHEBI:30616"/>
        <dbReference type="ChEBI" id="CHEBI:58121"/>
        <dbReference type="ChEBI" id="CHEBI:456216"/>
        <dbReference type="EC" id="2.7.1.16"/>
    </reaction>
</comment>
<comment type="catalytic activity">
    <reaction evidence="1">
        <text>L-ribulose + ATP = L-ribulose 5-phosphate + ADP + H(+)</text>
        <dbReference type="Rhea" id="RHEA:22072"/>
        <dbReference type="ChEBI" id="CHEBI:15378"/>
        <dbReference type="ChEBI" id="CHEBI:16880"/>
        <dbReference type="ChEBI" id="CHEBI:30616"/>
        <dbReference type="ChEBI" id="CHEBI:58226"/>
        <dbReference type="ChEBI" id="CHEBI:456216"/>
        <dbReference type="EC" id="2.7.1.16"/>
    </reaction>
</comment>
<comment type="pathway">
    <text evidence="1">Carbohydrate degradation; L-arabinose degradation via L-ribulose; D-xylulose 5-phosphate from L-arabinose (bacterial route): step 2/3.</text>
</comment>
<comment type="similarity">
    <text evidence="1">Belongs to the ribulokinase family.</text>
</comment>
<feature type="chain" id="PRO_1000127642" description="Ribulokinase">
    <location>
        <begin position="1"/>
        <end position="569"/>
    </location>
</feature>
<organism>
    <name type="scientific">Salmonella paratyphi A (strain AKU_12601)</name>
    <dbReference type="NCBI Taxonomy" id="554290"/>
    <lineage>
        <taxon>Bacteria</taxon>
        <taxon>Pseudomonadati</taxon>
        <taxon>Pseudomonadota</taxon>
        <taxon>Gammaproteobacteria</taxon>
        <taxon>Enterobacterales</taxon>
        <taxon>Enterobacteriaceae</taxon>
        <taxon>Salmonella</taxon>
    </lineage>
</organism>
<dbReference type="EC" id="2.7.1.16" evidence="1"/>
<dbReference type="EMBL" id="FM200053">
    <property type="protein sequence ID" value="CAR58212.1"/>
    <property type="molecule type" value="Genomic_DNA"/>
</dbReference>
<dbReference type="RefSeq" id="WP_000951819.1">
    <property type="nucleotide sequence ID" value="NC_011147.1"/>
</dbReference>
<dbReference type="SMR" id="B5BL44"/>
<dbReference type="KEGG" id="sek:SSPA0101"/>
<dbReference type="HOGENOM" id="CLU_009281_9_1_6"/>
<dbReference type="UniPathway" id="UPA00145">
    <property type="reaction ID" value="UER00566"/>
</dbReference>
<dbReference type="Proteomes" id="UP000001869">
    <property type="component" value="Chromosome"/>
</dbReference>
<dbReference type="GO" id="GO:0005737">
    <property type="term" value="C:cytoplasm"/>
    <property type="evidence" value="ECO:0007669"/>
    <property type="project" value="TreeGrafter"/>
</dbReference>
<dbReference type="GO" id="GO:0005524">
    <property type="term" value="F:ATP binding"/>
    <property type="evidence" value="ECO:0007669"/>
    <property type="project" value="UniProtKB-KW"/>
</dbReference>
<dbReference type="GO" id="GO:0019150">
    <property type="term" value="F:D-ribulokinase activity"/>
    <property type="evidence" value="ECO:0007669"/>
    <property type="project" value="RHEA"/>
</dbReference>
<dbReference type="GO" id="GO:0008741">
    <property type="term" value="F:ribulokinase activity"/>
    <property type="evidence" value="ECO:0007669"/>
    <property type="project" value="UniProtKB-UniRule"/>
</dbReference>
<dbReference type="GO" id="GO:0019569">
    <property type="term" value="P:L-arabinose catabolic process to xylulose 5-phosphate"/>
    <property type="evidence" value="ECO:0007669"/>
    <property type="project" value="UniProtKB-UniRule"/>
</dbReference>
<dbReference type="CDD" id="cd07781">
    <property type="entry name" value="ASKHA_NBD_FGGY_L-RBK"/>
    <property type="match status" value="1"/>
</dbReference>
<dbReference type="Gene3D" id="1.20.58.2240">
    <property type="match status" value="1"/>
</dbReference>
<dbReference type="Gene3D" id="3.30.420.40">
    <property type="match status" value="1"/>
</dbReference>
<dbReference type="HAMAP" id="MF_00520">
    <property type="entry name" value="Ribulokinase"/>
    <property type="match status" value="1"/>
</dbReference>
<dbReference type="InterPro" id="IPR043129">
    <property type="entry name" value="ATPase_NBD"/>
</dbReference>
<dbReference type="InterPro" id="IPR018485">
    <property type="entry name" value="FGGY_C"/>
</dbReference>
<dbReference type="InterPro" id="IPR005929">
    <property type="entry name" value="Ribulokinase"/>
</dbReference>
<dbReference type="NCBIfam" id="TIGR01234">
    <property type="entry name" value="L-ribulokinase"/>
    <property type="match status" value="1"/>
</dbReference>
<dbReference type="NCBIfam" id="NF003154">
    <property type="entry name" value="PRK04123.1"/>
    <property type="match status" value="1"/>
</dbReference>
<dbReference type="PANTHER" id="PTHR43435:SF4">
    <property type="entry name" value="FGGY CARBOHYDRATE KINASE DOMAIN-CONTAINING PROTEIN"/>
    <property type="match status" value="1"/>
</dbReference>
<dbReference type="PANTHER" id="PTHR43435">
    <property type="entry name" value="RIBULOKINASE"/>
    <property type="match status" value="1"/>
</dbReference>
<dbReference type="Pfam" id="PF02782">
    <property type="entry name" value="FGGY_C"/>
    <property type="match status" value="1"/>
</dbReference>
<dbReference type="SUPFAM" id="SSF53067">
    <property type="entry name" value="Actin-like ATPase domain"/>
    <property type="match status" value="2"/>
</dbReference>
<evidence type="ECO:0000255" key="1">
    <source>
        <dbReference type="HAMAP-Rule" id="MF_00520"/>
    </source>
</evidence>